<name>NOP10_PYRAB</name>
<keyword id="KW-0002">3D-structure</keyword>
<keyword id="KW-0687">Ribonucleoprotein</keyword>
<keyword id="KW-0690">Ribosome biogenesis</keyword>
<keyword id="KW-0698">rRNA processing</keyword>
<sequence>MRFRIRKCPKCGRYTLKETCPVCGEKTKVAHPPRFSPEDPYGEYRRRLKRELLGIGRKEK</sequence>
<proteinExistence type="evidence at protein level"/>
<protein>
    <recommendedName>
        <fullName>Ribosome biogenesis protein Nop10</fullName>
    </recommendedName>
</protein>
<comment type="function">
    <text evidence="1">Involved in ribosome biogenesis; more specifically in 18S rRNA pseudouridylation and in cleavage of pre-rRNA.</text>
</comment>
<comment type="similarity">
    <text evidence="2">Belongs to the NOP10 family.</text>
</comment>
<reference key="1">
    <citation type="journal article" date="2003" name="Mol. Microbiol.">
        <title>An integrated analysis of the genome of the hyperthermophilic archaeon Pyrococcus abyssi.</title>
        <authorList>
            <person name="Cohen G.N."/>
            <person name="Barbe V."/>
            <person name="Flament D."/>
            <person name="Galperin M."/>
            <person name="Heilig R."/>
            <person name="Lecompte O."/>
            <person name="Poch O."/>
            <person name="Prieur D."/>
            <person name="Querellou J."/>
            <person name="Ripp R."/>
            <person name="Thierry J.-C."/>
            <person name="Van der Oost J."/>
            <person name="Weissenbach J."/>
            <person name="Zivanovic Y."/>
            <person name="Forterre P."/>
        </authorList>
    </citation>
    <scope>NUCLEOTIDE SEQUENCE [LARGE SCALE GENOMIC DNA]</scope>
    <source>
        <strain>GE5 / Orsay</strain>
    </source>
</reference>
<reference key="2">
    <citation type="journal article" date="2012" name="Curr. Microbiol.">
        <title>Re-annotation of two hyperthermophilic archaea Pyrococcus abyssi GE5 and Pyrococcus furiosus DSM 3638.</title>
        <authorList>
            <person name="Gao J."/>
            <person name="Wang J."/>
        </authorList>
    </citation>
    <scope>GENOME REANNOTATION</scope>
    <source>
        <strain>GE5 / Orsay</strain>
    </source>
</reference>
<dbReference type="EMBL" id="AJ248285">
    <property type="protein sequence ID" value="CAB49761.1"/>
    <property type="molecule type" value="Genomic_DNA"/>
</dbReference>
<dbReference type="EMBL" id="HE613800">
    <property type="protein sequence ID" value="CCE70252.1"/>
    <property type="molecule type" value="Genomic_DNA"/>
</dbReference>
<dbReference type="PIR" id="H75130">
    <property type="entry name" value="H75130"/>
</dbReference>
<dbReference type="RefSeq" id="WP_010867970.1">
    <property type="nucleotide sequence ID" value="NC_000868.1"/>
</dbReference>
<dbReference type="PDB" id="2AUS">
    <property type="method" value="X-ray"/>
    <property type="resolution" value="2.10 A"/>
    <property type="chains" value="B/D=1-60"/>
</dbReference>
<dbReference type="PDBsum" id="2AUS"/>
<dbReference type="SMR" id="Q9V0E3"/>
<dbReference type="STRING" id="272844.PAB7213"/>
<dbReference type="KEGG" id="pab:PAB7213"/>
<dbReference type="PATRIC" id="fig|272844.11.peg.896"/>
<dbReference type="eggNOG" id="arCOG00906">
    <property type="taxonomic scope" value="Archaea"/>
</dbReference>
<dbReference type="HOGENOM" id="CLU_196480_1_0_2"/>
<dbReference type="OrthoDB" id="7259at2157"/>
<dbReference type="PhylomeDB" id="Q9V0E3"/>
<dbReference type="EvolutionaryTrace" id="Q9V0E3"/>
<dbReference type="Proteomes" id="UP000000810">
    <property type="component" value="Chromosome"/>
</dbReference>
<dbReference type="Proteomes" id="UP000009139">
    <property type="component" value="Chromosome"/>
</dbReference>
<dbReference type="GO" id="GO:1990904">
    <property type="term" value="C:ribonucleoprotein complex"/>
    <property type="evidence" value="ECO:0007669"/>
    <property type="project" value="UniProtKB-KW"/>
</dbReference>
<dbReference type="GO" id="GO:0030515">
    <property type="term" value="F:snoRNA binding"/>
    <property type="evidence" value="ECO:0007669"/>
    <property type="project" value="InterPro"/>
</dbReference>
<dbReference type="GO" id="GO:0001522">
    <property type="term" value="P:pseudouridine synthesis"/>
    <property type="evidence" value="ECO:0007669"/>
    <property type="project" value="InterPro"/>
</dbReference>
<dbReference type="GO" id="GO:0006364">
    <property type="term" value="P:rRNA processing"/>
    <property type="evidence" value="ECO:0007669"/>
    <property type="project" value="UniProtKB-UniRule"/>
</dbReference>
<dbReference type="Gene3D" id="2.20.28.40">
    <property type="entry name" value="H/ACA ribonucleoprotein complex, subunit Nop10"/>
    <property type="match status" value="1"/>
</dbReference>
<dbReference type="HAMAP" id="MF_00803">
    <property type="entry name" value="Nop10"/>
    <property type="match status" value="1"/>
</dbReference>
<dbReference type="InterPro" id="IPR007264">
    <property type="entry name" value="H/ACA_rnp_Nop10"/>
</dbReference>
<dbReference type="InterPro" id="IPR036756">
    <property type="entry name" value="H/ACA_rnp_Nop10_sf"/>
</dbReference>
<dbReference type="InterPro" id="IPR023532">
    <property type="entry name" value="Nop10_arc-typ"/>
</dbReference>
<dbReference type="NCBIfam" id="NF009623">
    <property type="entry name" value="PRK13130.1"/>
    <property type="match status" value="1"/>
</dbReference>
<dbReference type="PANTHER" id="PTHR13305:SF0">
    <property type="entry name" value="H_ACA RIBONUCLEOPROTEIN COMPLEX SUBUNIT 3"/>
    <property type="match status" value="1"/>
</dbReference>
<dbReference type="PANTHER" id="PTHR13305">
    <property type="entry name" value="RIBOSOME BIOGENESIS PROTEIN NOP10"/>
    <property type="match status" value="1"/>
</dbReference>
<dbReference type="Pfam" id="PF04135">
    <property type="entry name" value="Nop10p"/>
    <property type="match status" value="1"/>
</dbReference>
<dbReference type="SUPFAM" id="SSF144210">
    <property type="entry name" value="Nop10-like SnoRNP"/>
    <property type="match status" value="1"/>
</dbReference>
<feature type="chain" id="PRO_0000149022" description="Ribosome biogenesis protein Nop10">
    <location>
        <begin position="1"/>
        <end position="60"/>
    </location>
</feature>
<feature type="turn" evidence="3">
    <location>
        <begin position="9"/>
        <end position="11"/>
    </location>
</feature>
<feature type="strand" evidence="3">
    <location>
        <begin position="14"/>
        <end position="19"/>
    </location>
</feature>
<feature type="turn" evidence="3">
    <location>
        <begin position="21"/>
        <end position="23"/>
    </location>
</feature>
<feature type="strand" evidence="3">
    <location>
        <begin position="28"/>
        <end position="31"/>
    </location>
</feature>
<feature type="helix" evidence="3">
    <location>
        <begin position="42"/>
        <end position="52"/>
    </location>
</feature>
<organism>
    <name type="scientific">Pyrococcus abyssi (strain GE5 / Orsay)</name>
    <dbReference type="NCBI Taxonomy" id="272844"/>
    <lineage>
        <taxon>Archaea</taxon>
        <taxon>Methanobacteriati</taxon>
        <taxon>Methanobacteriota</taxon>
        <taxon>Thermococci</taxon>
        <taxon>Thermococcales</taxon>
        <taxon>Thermococcaceae</taxon>
        <taxon>Pyrococcus</taxon>
    </lineage>
</organism>
<gene>
    <name type="primary">nop10</name>
    <name type="ordered locus">PYRAB08470</name>
    <name type="ORF">PAB7213</name>
</gene>
<accession>Q9V0E3</accession>
<accession>G8ZH57</accession>
<evidence type="ECO:0000250" key="1"/>
<evidence type="ECO:0000305" key="2"/>
<evidence type="ECO:0007829" key="3">
    <source>
        <dbReference type="PDB" id="2AUS"/>
    </source>
</evidence>